<accession>B7JKI8</accession>
<proteinExistence type="inferred from homology"/>
<reference key="1">
    <citation type="submission" date="2008-10" db="EMBL/GenBank/DDBJ databases">
        <title>Genome sequence of Bacillus cereus AH820.</title>
        <authorList>
            <person name="Dodson R.J."/>
            <person name="Durkin A.S."/>
            <person name="Rosovitz M.J."/>
            <person name="Rasko D.A."/>
            <person name="Hoffmaster A."/>
            <person name="Ravel J."/>
            <person name="Sutton G."/>
        </authorList>
    </citation>
    <scope>NUCLEOTIDE SEQUENCE [LARGE SCALE GENOMIC DNA]</scope>
    <source>
        <strain>AH820</strain>
    </source>
</reference>
<protein>
    <recommendedName>
        <fullName evidence="1">NH(3)-dependent NAD(+) synthetase</fullName>
        <ecNumber evidence="1">6.3.1.5</ecNumber>
    </recommendedName>
</protein>
<sequence length="272" mass="30101">MTLQEQIMKALHVQPVIDPKAEIRKRVDFLKDYVKKTGAKGFVLGISGGQDSTLAGRLAQLAVEEIRNEGGNATFIAVRLPYKVQKDEDDAQLALQFIQADQSVAFDIASTVDAFSNQYENLLDESLTDFNKGNVKARIRMVTQYAIGGQKGLLVIGTDHAAEAVTGFFTKFGDGGADLLPLTGLTKRQGRALLQELGADERLYLKMPTADLLDEKPGQADETELGITYDQLDDYLEGKTVPADVAEKIEKRYTVSEHKRQVPASMFDDWWK</sequence>
<organism>
    <name type="scientific">Bacillus cereus (strain AH820)</name>
    <dbReference type="NCBI Taxonomy" id="405535"/>
    <lineage>
        <taxon>Bacteria</taxon>
        <taxon>Bacillati</taxon>
        <taxon>Bacillota</taxon>
        <taxon>Bacilli</taxon>
        <taxon>Bacillales</taxon>
        <taxon>Bacillaceae</taxon>
        <taxon>Bacillus</taxon>
        <taxon>Bacillus cereus group</taxon>
    </lineage>
</organism>
<name>NADE_BACC0</name>
<feature type="chain" id="PRO_1000118613" description="NH(3)-dependent NAD(+) synthetase">
    <location>
        <begin position="1"/>
        <end position="272"/>
    </location>
</feature>
<feature type="binding site" evidence="1">
    <location>
        <begin position="45"/>
        <end position="52"/>
    </location>
    <ligand>
        <name>ATP</name>
        <dbReference type="ChEBI" id="CHEBI:30616"/>
    </ligand>
</feature>
<feature type="binding site" evidence="1">
    <location>
        <position position="51"/>
    </location>
    <ligand>
        <name>Mg(2+)</name>
        <dbReference type="ChEBI" id="CHEBI:18420"/>
    </ligand>
</feature>
<feature type="binding site" evidence="1">
    <location>
        <position position="138"/>
    </location>
    <ligand>
        <name>deamido-NAD(+)</name>
        <dbReference type="ChEBI" id="CHEBI:58437"/>
    </ligand>
</feature>
<feature type="binding site" evidence="1">
    <location>
        <position position="158"/>
    </location>
    <ligand>
        <name>ATP</name>
        <dbReference type="ChEBI" id="CHEBI:30616"/>
    </ligand>
</feature>
<feature type="binding site" evidence="1">
    <location>
        <position position="163"/>
    </location>
    <ligand>
        <name>Mg(2+)</name>
        <dbReference type="ChEBI" id="CHEBI:18420"/>
    </ligand>
</feature>
<feature type="binding site" evidence="1">
    <location>
        <position position="171"/>
    </location>
    <ligand>
        <name>deamido-NAD(+)</name>
        <dbReference type="ChEBI" id="CHEBI:58437"/>
    </ligand>
</feature>
<feature type="binding site" evidence="1">
    <location>
        <position position="178"/>
    </location>
    <ligand>
        <name>deamido-NAD(+)</name>
        <dbReference type="ChEBI" id="CHEBI:58437"/>
    </ligand>
</feature>
<feature type="binding site" evidence="1">
    <location>
        <position position="187"/>
    </location>
    <ligand>
        <name>ATP</name>
        <dbReference type="ChEBI" id="CHEBI:30616"/>
    </ligand>
</feature>
<feature type="binding site" evidence="1">
    <location>
        <position position="209"/>
    </location>
    <ligand>
        <name>ATP</name>
        <dbReference type="ChEBI" id="CHEBI:30616"/>
    </ligand>
</feature>
<feature type="binding site" evidence="1">
    <location>
        <begin position="258"/>
        <end position="259"/>
    </location>
    <ligand>
        <name>deamido-NAD(+)</name>
        <dbReference type="ChEBI" id="CHEBI:58437"/>
    </ligand>
</feature>
<evidence type="ECO:0000255" key="1">
    <source>
        <dbReference type="HAMAP-Rule" id="MF_00193"/>
    </source>
</evidence>
<dbReference type="EC" id="6.3.1.5" evidence="1"/>
<dbReference type="EMBL" id="CP001283">
    <property type="protein sequence ID" value="ACK90307.1"/>
    <property type="molecule type" value="Genomic_DNA"/>
</dbReference>
<dbReference type="RefSeq" id="WP_000174879.1">
    <property type="nucleotide sequence ID" value="NC_011773.1"/>
</dbReference>
<dbReference type="SMR" id="B7JKI8"/>
<dbReference type="GeneID" id="75085226"/>
<dbReference type="KEGG" id="bcu:BCAH820_2031"/>
<dbReference type="HOGENOM" id="CLU_059327_3_0_9"/>
<dbReference type="UniPathway" id="UPA00253">
    <property type="reaction ID" value="UER00333"/>
</dbReference>
<dbReference type="Proteomes" id="UP000001363">
    <property type="component" value="Chromosome"/>
</dbReference>
<dbReference type="GO" id="GO:0005737">
    <property type="term" value="C:cytoplasm"/>
    <property type="evidence" value="ECO:0007669"/>
    <property type="project" value="InterPro"/>
</dbReference>
<dbReference type="GO" id="GO:0005524">
    <property type="term" value="F:ATP binding"/>
    <property type="evidence" value="ECO:0007669"/>
    <property type="project" value="UniProtKB-UniRule"/>
</dbReference>
<dbReference type="GO" id="GO:0004359">
    <property type="term" value="F:glutaminase activity"/>
    <property type="evidence" value="ECO:0007669"/>
    <property type="project" value="InterPro"/>
</dbReference>
<dbReference type="GO" id="GO:0046872">
    <property type="term" value="F:metal ion binding"/>
    <property type="evidence" value="ECO:0007669"/>
    <property type="project" value="UniProtKB-KW"/>
</dbReference>
<dbReference type="GO" id="GO:0003952">
    <property type="term" value="F:NAD+ synthase (glutamine-hydrolyzing) activity"/>
    <property type="evidence" value="ECO:0007669"/>
    <property type="project" value="InterPro"/>
</dbReference>
<dbReference type="GO" id="GO:0008795">
    <property type="term" value="F:NAD+ synthase activity"/>
    <property type="evidence" value="ECO:0007669"/>
    <property type="project" value="UniProtKB-UniRule"/>
</dbReference>
<dbReference type="GO" id="GO:0009435">
    <property type="term" value="P:NAD biosynthetic process"/>
    <property type="evidence" value="ECO:0007669"/>
    <property type="project" value="UniProtKB-UniRule"/>
</dbReference>
<dbReference type="CDD" id="cd00553">
    <property type="entry name" value="NAD_synthase"/>
    <property type="match status" value="1"/>
</dbReference>
<dbReference type="FunFam" id="3.40.50.620:FF:000015">
    <property type="entry name" value="NH(3)-dependent NAD(+) synthetase"/>
    <property type="match status" value="1"/>
</dbReference>
<dbReference type="Gene3D" id="3.40.50.620">
    <property type="entry name" value="HUPs"/>
    <property type="match status" value="1"/>
</dbReference>
<dbReference type="HAMAP" id="MF_00193">
    <property type="entry name" value="NadE_ammonia_dep"/>
    <property type="match status" value="1"/>
</dbReference>
<dbReference type="InterPro" id="IPR022310">
    <property type="entry name" value="NAD/GMP_synthase"/>
</dbReference>
<dbReference type="InterPro" id="IPR003694">
    <property type="entry name" value="NAD_synthase"/>
</dbReference>
<dbReference type="InterPro" id="IPR022926">
    <property type="entry name" value="NH(3)-dep_NAD(+)_synth"/>
</dbReference>
<dbReference type="InterPro" id="IPR014729">
    <property type="entry name" value="Rossmann-like_a/b/a_fold"/>
</dbReference>
<dbReference type="NCBIfam" id="TIGR00552">
    <property type="entry name" value="nadE"/>
    <property type="match status" value="1"/>
</dbReference>
<dbReference type="NCBIfam" id="NF001979">
    <property type="entry name" value="PRK00768.1"/>
    <property type="match status" value="1"/>
</dbReference>
<dbReference type="PANTHER" id="PTHR23090">
    <property type="entry name" value="NH 3 /GLUTAMINE-DEPENDENT NAD + SYNTHETASE"/>
    <property type="match status" value="1"/>
</dbReference>
<dbReference type="PANTHER" id="PTHR23090:SF7">
    <property type="entry name" value="NH(3)-DEPENDENT NAD(+) SYNTHETASE"/>
    <property type="match status" value="1"/>
</dbReference>
<dbReference type="Pfam" id="PF02540">
    <property type="entry name" value="NAD_synthase"/>
    <property type="match status" value="1"/>
</dbReference>
<dbReference type="SUPFAM" id="SSF52402">
    <property type="entry name" value="Adenine nucleotide alpha hydrolases-like"/>
    <property type="match status" value="1"/>
</dbReference>
<comment type="function">
    <text evidence="1">Catalyzes the ATP-dependent amidation of deamido-NAD to form NAD. Uses ammonia as a nitrogen source.</text>
</comment>
<comment type="catalytic activity">
    <reaction evidence="1">
        <text>deamido-NAD(+) + NH4(+) + ATP = AMP + diphosphate + NAD(+) + H(+)</text>
        <dbReference type="Rhea" id="RHEA:21188"/>
        <dbReference type="ChEBI" id="CHEBI:15378"/>
        <dbReference type="ChEBI" id="CHEBI:28938"/>
        <dbReference type="ChEBI" id="CHEBI:30616"/>
        <dbReference type="ChEBI" id="CHEBI:33019"/>
        <dbReference type="ChEBI" id="CHEBI:57540"/>
        <dbReference type="ChEBI" id="CHEBI:58437"/>
        <dbReference type="ChEBI" id="CHEBI:456215"/>
        <dbReference type="EC" id="6.3.1.5"/>
    </reaction>
</comment>
<comment type="pathway">
    <text evidence="1">Cofactor biosynthesis; NAD(+) biosynthesis; NAD(+) from deamido-NAD(+) (ammonia route): step 1/1.</text>
</comment>
<comment type="subunit">
    <text evidence="1">Homodimer.</text>
</comment>
<comment type="similarity">
    <text evidence="1">Belongs to the NAD synthetase family.</text>
</comment>
<keyword id="KW-0067">ATP-binding</keyword>
<keyword id="KW-0436">Ligase</keyword>
<keyword id="KW-0460">Magnesium</keyword>
<keyword id="KW-0479">Metal-binding</keyword>
<keyword id="KW-0520">NAD</keyword>
<keyword id="KW-0547">Nucleotide-binding</keyword>
<gene>
    <name evidence="1" type="primary">nadE</name>
    <name type="ordered locus">BCAH820_2031</name>
</gene>